<accession>C3RT22</accession>
<dbReference type="EMBL" id="EU346905">
    <property type="protein sequence ID" value="ACB12321.1"/>
    <property type="molecule type" value="mRNA"/>
</dbReference>
<dbReference type="GO" id="GO:0005576">
    <property type="term" value="C:extracellular region"/>
    <property type="evidence" value="ECO:0000314"/>
    <property type="project" value="UniProtKB"/>
</dbReference>
<dbReference type="GO" id="GO:0061844">
    <property type="term" value="P:antimicrobial humoral immune response mediated by antimicrobial peptide"/>
    <property type="evidence" value="ECO:0000314"/>
    <property type="project" value="UniProtKB"/>
</dbReference>
<dbReference type="GO" id="GO:0050832">
    <property type="term" value="P:defense response to fungus"/>
    <property type="evidence" value="ECO:0000314"/>
    <property type="project" value="UniProtKB"/>
</dbReference>
<dbReference type="GO" id="GO:0050829">
    <property type="term" value="P:defense response to Gram-negative bacterium"/>
    <property type="evidence" value="ECO:0000314"/>
    <property type="project" value="UniProtKB"/>
</dbReference>
<dbReference type="GO" id="GO:0050830">
    <property type="term" value="P:defense response to Gram-positive bacterium"/>
    <property type="evidence" value="ECO:0000314"/>
    <property type="project" value="UniProtKB"/>
</dbReference>
<dbReference type="GO" id="GO:0031640">
    <property type="term" value="P:killing of cells of another organism"/>
    <property type="evidence" value="ECO:0007669"/>
    <property type="project" value="UniProtKB-KW"/>
</dbReference>
<dbReference type="InterPro" id="IPR004275">
    <property type="entry name" value="Frog_antimicrobial_propeptide"/>
</dbReference>
<dbReference type="Pfam" id="PF03032">
    <property type="entry name" value="FSAP_sig_propep"/>
    <property type="match status" value="1"/>
</dbReference>
<organism>
    <name type="scientific">Limnonectes kuhlii</name>
    <name type="common">Kuhl's Creek frog</name>
    <name type="synonym">Rana kuhlii</name>
    <dbReference type="NCBI Taxonomy" id="110107"/>
    <lineage>
        <taxon>Eukaryota</taxon>
        <taxon>Metazoa</taxon>
        <taxon>Chordata</taxon>
        <taxon>Craniata</taxon>
        <taxon>Vertebrata</taxon>
        <taxon>Euteleostomi</taxon>
        <taxon>Amphibia</taxon>
        <taxon>Batrachia</taxon>
        <taxon>Anura</taxon>
        <taxon>Neobatrachia</taxon>
        <taxon>Ranoidea</taxon>
        <taxon>Dicroglossidae</taxon>
        <taxon>Dicroglossinae</taxon>
        <taxon>Limnonectes</taxon>
    </lineage>
</organism>
<protein>
    <recommendedName>
        <fullName evidence="3">Temporin-LK1</fullName>
    </recommendedName>
</protein>
<keyword id="KW-0027">Amidation</keyword>
<keyword id="KW-0878">Amphibian defense peptide</keyword>
<keyword id="KW-0044">Antibiotic</keyword>
<keyword id="KW-0929">Antimicrobial</keyword>
<keyword id="KW-0165">Cleavage on pair of basic residues</keyword>
<keyword id="KW-0903">Direct protein sequencing</keyword>
<keyword id="KW-0295">Fungicide</keyword>
<keyword id="KW-0964">Secreted</keyword>
<keyword id="KW-0732">Signal</keyword>
<proteinExistence type="evidence at protein level"/>
<name>TP1_LIMKU</name>
<evidence type="ECO:0000255" key="1"/>
<evidence type="ECO:0000269" key="2">
    <source>
    </source>
</evidence>
<evidence type="ECO:0000303" key="3">
    <source>
    </source>
</evidence>
<evidence type="ECO:0000305" key="4"/>
<evidence type="ECO:0000305" key="5">
    <source>
    </source>
</evidence>
<feature type="signal peptide" evidence="1">
    <location>
        <begin position="1"/>
        <end position="22"/>
    </location>
</feature>
<feature type="propeptide" id="PRO_0000445397" evidence="5">
    <location>
        <begin position="23"/>
        <end position="44"/>
    </location>
</feature>
<feature type="peptide" id="PRO_0000445398" description="Temporin-LK1" evidence="2">
    <location>
        <begin position="47"/>
        <end position="63"/>
    </location>
</feature>
<feature type="modified residue" description="Phenylalanine amide" evidence="2">
    <location>
        <position position="63"/>
    </location>
</feature>
<sequence length="65" mass="7471">MFTMKKSLLLLFFLGAINLPLCQEERNAEEERRDGDDEGSVEVQKRFFPLLFGALSSMMPKLFGK</sequence>
<comment type="function">
    <text evidence="2">Has antimicrobial activity against Gram-positive bacteria S.aureus ATCC 2592 (MIC=2.5 uM), S.aureus ATCC 43300 (MIC=2.5 uM) and B.subtilis (MIC=15.0 uM), against Gram-negative bacteria E.coli ML-35P (MIC=30.0 uM), P.aeruginosa PA01 (MIC=2.5 uM) and P.aeruginosa ATCC 27853 (MIC=2.5 uM) and against fungus C.albicans ATCC 2002 (MIC=5.0 uM).</text>
</comment>
<comment type="subcellular location">
    <subcellularLocation>
        <location evidence="1 2">Secreted</location>
    </subcellularLocation>
</comment>
<comment type="tissue specificity">
    <text evidence="2">Expressed by the skin glands.</text>
</comment>
<comment type="mass spectrometry" mass="1945.6" method="MALDI" evidence="2"/>
<comment type="similarity">
    <text evidence="4">Belongs to the frog skin active peptide (FSAP) family. Temporin subfamily.</text>
</comment>
<reference evidence="4" key="1">
    <citation type="journal article" date="2013" name="Mol. Biol. Rep.">
        <title>Five novel antimicrobial peptides from the Kuhl's wart frog skin secretions, Limnonectes kuhlii.</title>
        <authorList>
            <person name="Wang G."/>
            <person name="Wang Y."/>
            <person name="Ma D."/>
            <person name="Liu H."/>
            <person name="Li J."/>
            <person name="Zhang K."/>
            <person name="Yang X."/>
            <person name="Lai R."/>
            <person name="Liu J."/>
        </authorList>
    </citation>
    <scope>NUCLEOTIDE SEQUENCE [MRNA]</scope>
    <scope>PROTEIN SEQUENCE OF 47-63</scope>
    <scope>FUNCTION</scope>
    <scope>SUBCELLULAR LOCATION</scope>
    <scope>TISSUE SPECIFICITY</scope>
    <scope>MASS SPECTROMETRY</scope>
    <scope>AMIDATION AT PHE-63</scope>
    <source>
        <tissue evidence="3">Skin</tissue>
        <tissue evidence="3">Skin secretion</tissue>
    </source>
</reference>